<name>FLIT_ENT38</name>
<reference key="1">
    <citation type="journal article" date="2010" name="PLoS Genet.">
        <title>Genome sequence of the plant growth promoting endophytic bacterium Enterobacter sp. 638.</title>
        <authorList>
            <person name="Taghavi S."/>
            <person name="van der Lelie D."/>
            <person name="Hoffman A."/>
            <person name="Zhang Y.B."/>
            <person name="Walla M.D."/>
            <person name="Vangronsveld J."/>
            <person name="Newman L."/>
            <person name="Monchy S."/>
        </authorList>
    </citation>
    <scope>NUCLEOTIDE SEQUENCE [LARGE SCALE GENOMIC DNA]</scope>
    <source>
        <strain>638</strain>
    </source>
</reference>
<gene>
    <name evidence="1" type="primary">fliT</name>
    <name type="ordered locus">Ent638_2525</name>
</gene>
<evidence type="ECO:0000255" key="1">
    <source>
        <dbReference type="HAMAP-Rule" id="MF_01180"/>
    </source>
</evidence>
<comment type="function">
    <text evidence="1">Dual-function protein that regulates the transcription of class 2 flagellar operons and that also acts as an export chaperone for the filament-capping protein FliD. As a transcriptional regulator, acts as an anti-FlhDC factor; it directly binds FlhC, thus inhibiting the binding of the FlhC/FlhD complex to class 2 promoters, resulting in decreased expression of class 2 flagellar operons. As a chaperone, effects FliD transition to the membrane by preventing its premature polymerization, and by directing it to the export apparatus.</text>
</comment>
<comment type="subunit">
    <text evidence="1">Homodimer. Interacts with FliD and FlhC.</text>
</comment>
<comment type="subcellular location">
    <subcellularLocation>
        <location evidence="1">Cytoplasm</location>
        <location evidence="1">Cytosol</location>
    </subcellularLocation>
</comment>
<comment type="similarity">
    <text evidence="1">Belongs to the FliT family.</text>
</comment>
<organism>
    <name type="scientific">Enterobacter sp. (strain 638)</name>
    <dbReference type="NCBI Taxonomy" id="399742"/>
    <lineage>
        <taxon>Bacteria</taxon>
        <taxon>Pseudomonadati</taxon>
        <taxon>Pseudomonadota</taxon>
        <taxon>Gammaproteobacteria</taxon>
        <taxon>Enterobacterales</taxon>
        <taxon>Enterobacteriaceae</taxon>
        <taxon>Enterobacter</taxon>
    </lineage>
</organism>
<proteinExistence type="inferred from homology"/>
<dbReference type="EMBL" id="CP000653">
    <property type="protein sequence ID" value="ABP61194.1"/>
    <property type="molecule type" value="Genomic_DNA"/>
</dbReference>
<dbReference type="RefSeq" id="WP_015959527.1">
    <property type="nucleotide sequence ID" value="NC_009436.1"/>
</dbReference>
<dbReference type="SMR" id="A4WBW4"/>
<dbReference type="STRING" id="399742.Ent638_2525"/>
<dbReference type="KEGG" id="ent:Ent638_2525"/>
<dbReference type="eggNOG" id="ENOG5032ZV7">
    <property type="taxonomic scope" value="Bacteria"/>
</dbReference>
<dbReference type="HOGENOM" id="CLU_155793_1_0_6"/>
<dbReference type="OrthoDB" id="6494117at2"/>
<dbReference type="Proteomes" id="UP000000230">
    <property type="component" value="Chromosome"/>
</dbReference>
<dbReference type="GO" id="GO:0005829">
    <property type="term" value="C:cytosol"/>
    <property type="evidence" value="ECO:0007669"/>
    <property type="project" value="UniProtKB-SubCell"/>
</dbReference>
<dbReference type="GO" id="GO:0044781">
    <property type="term" value="P:bacterial-type flagellum organization"/>
    <property type="evidence" value="ECO:0007669"/>
    <property type="project" value="UniProtKB-KW"/>
</dbReference>
<dbReference type="GO" id="GO:1902209">
    <property type="term" value="P:negative regulation of bacterial-type flagellum assembly"/>
    <property type="evidence" value="ECO:0007669"/>
    <property type="project" value="UniProtKB-UniRule"/>
</dbReference>
<dbReference type="GO" id="GO:0006457">
    <property type="term" value="P:protein folding"/>
    <property type="evidence" value="ECO:0007669"/>
    <property type="project" value="UniProtKB-UniRule"/>
</dbReference>
<dbReference type="Gene3D" id="1.20.58.380">
    <property type="entry name" value="Flagellar protein flit"/>
    <property type="match status" value="1"/>
</dbReference>
<dbReference type="HAMAP" id="MF_01180">
    <property type="entry name" value="FliT"/>
    <property type="match status" value="1"/>
</dbReference>
<dbReference type="InterPro" id="IPR008622">
    <property type="entry name" value="FliT"/>
</dbReference>
<dbReference type="NCBIfam" id="NF007836">
    <property type="entry name" value="PRK10548.1"/>
    <property type="match status" value="1"/>
</dbReference>
<dbReference type="Pfam" id="PF05400">
    <property type="entry name" value="FliT"/>
    <property type="match status" value="1"/>
</dbReference>
<protein>
    <recommendedName>
        <fullName evidence="1">Flagellar protein FliT</fullName>
    </recommendedName>
</protein>
<accession>A4WBW4</accession>
<feature type="chain" id="PRO_0000353874" description="Flagellar protein FliT">
    <location>
        <begin position="1"/>
        <end position="120"/>
    </location>
</feature>
<feature type="region of interest" description="Required for homodimerization" evidence="1">
    <location>
        <begin position="1"/>
        <end position="50"/>
    </location>
</feature>
<feature type="region of interest" description="FliD binding" evidence="1">
    <location>
        <begin position="59"/>
        <end position="97"/>
    </location>
</feature>
<sequence length="120" mass="13427">MNDSSLSLKKWHALSALSNTMLSLAQSGKWDELIEQEVAYVSLVEKISITPFPPGSKHIQDQAMVMLNNVLQNEMTLKTLLQERMDELHGLMAQTGKQKNVNITYGRLSGNVLFPGEINQ</sequence>
<keyword id="KW-1005">Bacterial flagellum biogenesis</keyword>
<keyword id="KW-0143">Chaperone</keyword>
<keyword id="KW-0963">Cytoplasm</keyword>
<keyword id="KW-0678">Repressor</keyword>
<keyword id="KW-0804">Transcription</keyword>
<keyword id="KW-0805">Transcription regulation</keyword>